<accession>A4IT57</accession>
<evidence type="ECO:0000255" key="1">
    <source>
        <dbReference type="HAMAP-Rule" id="MF_01970"/>
    </source>
</evidence>
<evidence type="ECO:0000305" key="2"/>
<gene>
    <name evidence="1" type="primary">kynU</name>
    <name type="ordered locus">GTNG_3166</name>
</gene>
<sequence length="428" mass="48333">MNSTALEPTLEFARKLDQEDPLRHFRDEFYLPPNSIYMDGNSLGLLSKRAEKTLFTILQDWKLLGIDGWTKGTYPWFDLSEKIGAMLAPLVGASPEEVIATGSTTVNLHQLVSTFYQPEGKRTKILADELTFPSDIYALQSQLRIHGYDPSTHLIRVKSRDGRFLEEEDIIAAMSEDVALVVLPTVLYRSGQILDIQLLTDEAHKRGILIGFDACHSIGAIPHSFSEWGVDFAFWCNYKYMNGGPGCVAGLYVHRKHFGSAPGLAGWFGSKKDKQFDMEHTFTPSLTAGAYQIGTPHLLSLAPLIGSLEIFQEAGIERIRQKSLQLTNYFMYLIEQELSHFGFIIGNPKDDVRRGGHISLEHEEAARICKSLKENGVIPDFRAPNIIRLAPIALYTSYEEVWNVVQIMKKIMQEKQYKKFSNEREVVA</sequence>
<reference key="1">
    <citation type="journal article" date="2007" name="Proc. Natl. Acad. Sci. U.S.A.">
        <title>Genome and proteome of long-chain alkane degrading Geobacillus thermodenitrificans NG80-2 isolated from a deep-subsurface oil reservoir.</title>
        <authorList>
            <person name="Feng L."/>
            <person name="Wang W."/>
            <person name="Cheng J."/>
            <person name="Ren Y."/>
            <person name="Zhao G."/>
            <person name="Gao C."/>
            <person name="Tang Y."/>
            <person name="Liu X."/>
            <person name="Han W."/>
            <person name="Peng X."/>
            <person name="Liu R."/>
            <person name="Wang L."/>
        </authorList>
    </citation>
    <scope>NUCLEOTIDE SEQUENCE [LARGE SCALE GENOMIC DNA]</scope>
    <source>
        <strain>NG80-2</strain>
    </source>
</reference>
<feature type="chain" id="PRO_0000357007" description="Kynureninase">
    <location>
        <begin position="1"/>
        <end position="428"/>
    </location>
</feature>
<feature type="binding site" evidence="1">
    <location>
        <position position="104"/>
    </location>
    <ligand>
        <name>pyridoxal 5'-phosphate</name>
        <dbReference type="ChEBI" id="CHEBI:597326"/>
    </ligand>
</feature>
<feature type="binding site" evidence="1">
    <location>
        <position position="105"/>
    </location>
    <ligand>
        <name>pyridoxal 5'-phosphate</name>
        <dbReference type="ChEBI" id="CHEBI:597326"/>
    </ligand>
</feature>
<feature type="binding site" evidence="1">
    <location>
        <begin position="132"/>
        <end position="135"/>
    </location>
    <ligand>
        <name>pyridoxal 5'-phosphate</name>
        <dbReference type="ChEBI" id="CHEBI:597326"/>
    </ligand>
</feature>
<feature type="binding site" evidence="1">
    <location>
        <position position="213"/>
    </location>
    <ligand>
        <name>pyridoxal 5'-phosphate</name>
        <dbReference type="ChEBI" id="CHEBI:597326"/>
    </ligand>
</feature>
<feature type="binding site" evidence="1">
    <location>
        <position position="216"/>
    </location>
    <ligand>
        <name>pyridoxal 5'-phosphate</name>
        <dbReference type="ChEBI" id="CHEBI:597326"/>
    </ligand>
</feature>
<feature type="binding site" evidence="1">
    <location>
        <position position="238"/>
    </location>
    <ligand>
        <name>pyridoxal 5'-phosphate</name>
        <dbReference type="ChEBI" id="CHEBI:597326"/>
    </ligand>
</feature>
<feature type="binding site" evidence="1">
    <location>
        <position position="267"/>
    </location>
    <ligand>
        <name>pyridoxal 5'-phosphate</name>
        <dbReference type="ChEBI" id="CHEBI:597326"/>
    </ligand>
</feature>
<feature type="binding site" evidence="1">
    <location>
        <position position="295"/>
    </location>
    <ligand>
        <name>pyridoxal 5'-phosphate</name>
        <dbReference type="ChEBI" id="CHEBI:597326"/>
    </ligand>
</feature>
<feature type="modified residue" description="N6-(pyridoxal phosphate)lysine" evidence="1">
    <location>
        <position position="239"/>
    </location>
</feature>
<proteinExistence type="inferred from homology"/>
<keyword id="KW-0378">Hydrolase</keyword>
<keyword id="KW-0662">Pyridine nucleotide biosynthesis</keyword>
<keyword id="KW-0663">Pyridoxal phosphate</keyword>
<dbReference type="EC" id="3.7.1.3" evidence="1"/>
<dbReference type="EMBL" id="CP000557">
    <property type="protein sequence ID" value="ABO68511.1"/>
    <property type="status" value="ALT_INIT"/>
    <property type="molecule type" value="Genomic_DNA"/>
</dbReference>
<dbReference type="RefSeq" id="WP_011888295.1">
    <property type="nucleotide sequence ID" value="NC_009328.1"/>
</dbReference>
<dbReference type="SMR" id="A4IT57"/>
<dbReference type="KEGG" id="gtn:GTNG_3166"/>
<dbReference type="eggNOG" id="COG3844">
    <property type="taxonomic scope" value="Bacteria"/>
</dbReference>
<dbReference type="HOGENOM" id="CLU_003433_4_0_9"/>
<dbReference type="UniPathway" id="UPA00253">
    <property type="reaction ID" value="UER00329"/>
</dbReference>
<dbReference type="UniPathway" id="UPA00334">
    <property type="reaction ID" value="UER00455"/>
</dbReference>
<dbReference type="Proteomes" id="UP000001578">
    <property type="component" value="Chromosome"/>
</dbReference>
<dbReference type="GO" id="GO:0005737">
    <property type="term" value="C:cytoplasm"/>
    <property type="evidence" value="ECO:0007669"/>
    <property type="project" value="InterPro"/>
</dbReference>
<dbReference type="GO" id="GO:0030429">
    <property type="term" value="F:kynureninase activity"/>
    <property type="evidence" value="ECO:0007669"/>
    <property type="project" value="UniProtKB-UniRule"/>
</dbReference>
<dbReference type="GO" id="GO:0030170">
    <property type="term" value="F:pyridoxal phosphate binding"/>
    <property type="evidence" value="ECO:0007669"/>
    <property type="project" value="UniProtKB-UniRule"/>
</dbReference>
<dbReference type="GO" id="GO:0043420">
    <property type="term" value="P:anthranilate metabolic process"/>
    <property type="evidence" value="ECO:0007669"/>
    <property type="project" value="TreeGrafter"/>
</dbReference>
<dbReference type="GO" id="GO:0097053">
    <property type="term" value="P:L-kynurenine catabolic process"/>
    <property type="evidence" value="ECO:0007669"/>
    <property type="project" value="UniProtKB-UniRule"/>
</dbReference>
<dbReference type="GO" id="GO:0019441">
    <property type="term" value="P:L-tryptophan catabolic process to kynurenine"/>
    <property type="evidence" value="ECO:0007669"/>
    <property type="project" value="TreeGrafter"/>
</dbReference>
<dbReference type="GO" id="GO:0009435">
    <property type="term" value="P:NAD biosynthetic process"/>
    <property type="evidence" value="ECO:0007669"/>
    <property type="project" value="UniProtKB-UniPathway"/>
</dbReference>
<dbReference type="GO" id="GO:0019805">
    <property type="term" value="P:quinolinate biosynthetic process"/>
    <property type="evidence" value="ECO:0007669"/>
    <property type="project" value="UniProtKB-UniRule"/>
</dbReference>
<dbReference type="Gene3D" id="3.90.1150.10">
    <property type="entry name" value="Aspartate Aminotransferase, domain 1"/>
    <property type="match status" value="1"/>
</dbReference>
<dbReference type="Gene3D" id="3.40.640.10">
    <property type="entry name" value="Type I PLP-dependent aspartate aminotransferase-like (Major domain)"/>
    <property type="match status" value="1"/>
</dbReference>
<dbReference type="HAMAP" id="MF_01970">
    <property type="entry name" value="Kynureninase"/>
    <property type="match status" value="1"/>
</dbReference>
<dbReference type="InterPro" id="IPR010111">
    <property type="entry name" value="Kynureninase"/>
</dbReference>
<dbReference type="InterPro" id="IPR015424">
    <property type="entry name" value="PyrdxlP-dep_Trfase"/>
</dbReference>
<dbReference type="InterPro" id="IPR015421">
    <property type="entry name" value="PyrdxlP-dep_Trfase_major"/>
</dbReference>
<dbReference type="InterPro" id="IPR015422">
    <property type="entry name" value="PyrdxlP-dep_Trfase_small"/>
</dbReference>
<dbReference type="NCBIfam" id="TIGR01814">
    <property type="entry name" value="kynureninase"/>
    <property type="match status" value="1"/>
</dbReference>
<dbReference type="PANTHER" id="PTHR14084">
    <property type="entry name" value="KYNURENINASE"/>
    <property type="match status" value="1"/>
</dbReference>
<dbReference type="PANTHER" id="PTHR14084:SF0">
    <property type="entry name" value="KYNURENINASE"/>
    <property type="match status" value="1"/>
</dbReference>
<dbReference type="Pfam" id="PF22580">
    <property type="entry name" value="KYNU_C"/>
    <property type="match status" value="1"/>
</dbReference>
<dbReference type="PIRSF" id="PIRSF038800">
    <property type="entry name" value="KYNU"/>
    <property type="match status" value="1"/>
</dbReference>
<dbReference type="SUPFAM" id="SSF53383">
    <property type="entry name" value="PLP-dependent transferases"/>
    <property type="match status" value="1"/>
</dbReference>
<organism>
    <name type="scientific">Geobacillus thermodenitrificans (strain NG80-2)</name>
    <dbReference type="NCBI Taxonomy" id="420246"/>
    <lineage>
        <taxon>Bacteria</taxon>
        <taxon>Bacillati</taxon>
        <taxon>Bacillota</taxon>
        <taxon>Bacilli</taxon>
        <taxon>Bacillales</taxon>
        <taxon>Anoxybacillaceae</taxon>
        <taxon>Geobacillus</taxon>
    </lineage>
</organism>
<protein>
    <recommendedName>
        <fullName evidence="1">Kynureninase</fullName>
        <ecNumber evidence="1">3.7.1.3</ecNumber>
    </recommendedName>
    <alternativeName>
        <fullName evidence="1">L-kynurenine hydrolase</fullName>
    </alternativeName>
</protein>
<name>KYNU_GEOTN</name>
<comment type="function">
    <text evidence="1">Catalyzes the cleavage of L-kynurenine (L-Kyn) and L-3-hydroxykynurenine (L-3OHKyn) into anthranilic acid (AA) and 3-hydroxyanthranilic acid (3-OHAA), respectively.</text>
</comment>
<comment type="catalytic activity">
    <reaction evidence="1">
        <text>L-kynurenine + H2O = anthranilate + L-alanine + H(+)</text>
        <dbReference type="Rhea" id="RHEA:16813"/>
        <dbReference type="ChEBI" id="CHEBI:15377"/>
        <dbReference type="ChEBI" id="CHEBI:15378"/>
        <dbReference type="ChEBI" id="CHEBI:16567"/>
        <dbReference type="ChEBI" id="CHEBI:57959"/>
        <dbReference type="ChEBI" id="CHEBI:57972"/>
        <dbReference type="EC" id="3.7.1.3"/>
    </reaction>
</comment>
<comment type="catalytic activity">
    <reaction evidence="1">
        <text>3-hydroxy-L-kynurenine + H2O = 3-hydroxyanthranilate + L-alanine + H(+)</text>
        <dbReference type="Rhea" id="RHEA:25143"/>
        <dbReference type="ChEBI" id="CHEBI:15377"/>
        <dbReference type="ChEBI" id="CHEBI:15378"/>
        <dbReference type="ChEBI" id="CHEBI:36559"/>
        <dbReference type="ChEBI" id="CHEBI:57972"/>
        <dbReference type="ChEBI" id="CHEBI:58125"/>
        <dbReference type="EC" id="3.7.1.3"/>
    </reaction>
</comment>
<comment type="cofactor">
    <cofactor evidence="1">
        <name>pyridoxal 5'-phosphate</name>
        <dbReference type="ChEBI" id="CHEBI:597326"/>
    </cofactor>
</comment>
<comment type="pathway">
    <text evidence="1">Amino-acid degradation; L-kynurenine degradation; L-alanine and anthranilate from L-kynurenine: step 1/1.</text>
</comment>
<comment type="pathway">
    <text evidence="1">Cofactor biosynthesis; NAD(+) biosynthesis; quinolinate from L-kynurenine: step 2/3.</text>
</comment>
<comment type="subunit">
    <text evidence="1">Homodimer.</text>
</comment>
<comment type="similarity">
    <text evidence="1">Belongs to the kynureninase family.</text>
</comment>
<comment type="sequence caution" evidence="2">
    <conflict type="erroneous initiation">
        <sequence resource="EMBL-CDS" id="ABO68511"/>
    </conflict>
</comment>